<sequence>MAVGKNKRLSKGKKGLKKKVIDPFTKKEWFDIKAPSTFENRAVGKTLINRSTGLKNAADGLKGRVVEVCLADLQGSEDHSSRKVKLRVDEVQGKNLLTNFHGIDFTTDKLRSLVRKWQSLVEANVTVKTSDDYVLRIFAIAFTKRQANQIRKTTYAQSSKLREVRKKMIEIMQREVSNCTLAQLTSKLIPEVIGREIEKSTQTILPLQNIHIRKVKLLKQPKFDLGSLLALHGEGSTEEKGKKVSAGFKDVVLETV</sequence>
<comment type="subunit">
    <text evidence="1">Component of the small ribosomal subunit. Mature ribosomes consist of a small (40S) and a large (60S) subunit. The 40S subunit contains about 33 different proteins and 1 molecule of RNA (18S). The 60S subunit contains about 49 different proteins and 3 molecules of RNA (25S, 5.8S and 5S).</text>
</comment>
<comment type="subcellular location">
    <subcellularLocation>
        <location evidence="1">Cytoplasm</location>
    </subcellularLocation>
</comment>
<comment type="similarity">
    <text evidence="1">Belongs to the eukaryotic ribosomal protein eS1 family.</text>
</comment>
<proteinExistence type="inferred from homology"/>
<keyword id="KW-0007">Acetylation</keyword>
<keyword id="KW-0963">Cytoplasm</keyword>
<keyword id="KW-1185">Reference proteome</keyword>
<keyword id="KW-0687">Ribonucleoprotein</keyword>
<keyword id="KW-0689">Ribosomal protein</keyword>
<feature type="initiator methionine" description="Removed" evidence="1">
    <location>
        <position position="1"/>
    </location>
</feature>
<feature type="chain" id="PRO_0000389374" description="Small ribosomal subunit protein eS1A">
    <location>
        <begin position="2"/>
        <end position="256"/>
    </location>
</feature>
<feature type="modified residue" description="N-acetylalanine; partial" evidence="1">
    <location>
        <position position="2"/>
    </location>
</feature>
<reference key="1">
    <citation type="journal article" date="2004" name="Nature">
        <title>Genome evolution in yeasts.</title>
        <authorList>
            <person name="Dujon B."/>
            <person name="Sherman D."/>
            <person name="Fischer G."/>
            <person name="Durrens P."/>
            <person name="Casaregola S."/>
            <person name="Lafontaine I."/>
            <person name="de Montigny J."/>
            <person name="Marck C."/>
            <person name="Neuveglise C."/>
            <person name="Talla E."/>
            <person name="Goffard N."/>
            <person name="Frangeul L."/>
            <person name="Aigle M."/>
            <person name="Anthouard V."/>
            <person name="Babour A."/>
            <person name="Barbe V."/>
            <person name="Barnay S."/>
            <person name="Blanchin S."/>
            <person name="Beckerich J.-M."/>
            <person name="Beyne E."/>
            <person name="Bleykasten C."/>
            <person name="Boisrame A."/>
            <person name="Boyer J."/>
            <person name="Cattolico L."/>
            <person name="Confanioleri F."/>
            <person name="de Daruvar A."/>
            <person name="Despons L."/>
            <person name="Fabre E."/>
            <person name="Fairhead C."/>
            <person name="Ferry-Dumazet H."/>
            <person name="Groppi A."/>
            <person name="Hantraye F."/>
            <person name="Hennequin C."/>
            <person name="Jauniaux N."/>
            <person name="Joyet P."/>
            <person name="Kachouri R."/>
            <person name="Kerrest A."/>
            <person name="Koszul R."/>
            <person name="Lemaire M."/>
            <person name="Lesur I."/>
            <person name="Ma L."/>
            <person name="Muller H."/>
            <person name="Nicaud J.-M."/>
            <person name="Nikolski M."/>
            <person name="Oztas S."/>
            <person name="Ozier-Kalogeropoulos O."/>
            <person name="Pellenz S."/>
            <person name="Potier S."/>
            <person name="Richard G.-F."/>
            <person name="Straub M.-L."/>
            <person name="Suleau A."/>
            <person name="Swennen D."/>
            <person name="Tekaia F."/>
            <person name="Wesolowski-Louvel M."/>
            <person name="Westhof E."/>
            <person name="Wirth B."/>
            <person name="Zeniou-Meyer M."/>
            <person name="Zivanovic Y."/>
            <person name="Bolotin-Fukuhara M."/>
            <person name="Thierry A."/>
            <person name="Bouchier C."/>
            <person name="Caudron B."/>
            <person name="Scarpelli C."/>
            <person name="Gaillardin C."/>
            <person name="Weissenbach J."/>
            <person name="Wincker P."/>
            <person name="Souciet J.-L."/>
        </authorList>
    </citation>
    <scope>NUCLEOTIDE SEQUENCE [LARGE SCALE GENOMIC DNA]</scope>
    <source>
        <strain>ATCC 36239 / CBS 767 / BCRC 21394 / JCM 1990 / NBRC 0083 / IGC 2968</strain>
    </source>
</reference>
<organism>
    <name type="scientific">Debaryomyces hansenii (strain ATCC 36239 / CBS 767 / BCRC 21394 / JCM 1990 / NBRC 0083 / IGC 2968)</name>
    <name type="common">Yeast</name>
    <name type="synonym">Torulaspora hansenii</name>
    <dbReference type="NCBI Taxonomy" id="284592"/>
    <lineage>
        <taxon>Eukaryota</taxon>
        <taxon>Fungi</taxon>
        <taxon>Dikarya</taxon>
        <taxon>Ascomycota</taxon>
        <taxon>Saccharomycotina</taxon>
        <taxon>Pichiomycetes</taxon>
        <taxon>Debaryomycetaceae</taxon>
        <taxon>Debaryomyces</taxon>
    </lineage>
</organism>
<name>RS3A1_DEBHA</name>
<protein>
    <recommendedName>
        <fullName evidence="1">Small ribosomal subunit protein eS1A</fullName>
    </recommendedName>
    <alternativeName>
        <fullName>40S ribosomal protein S1-A</fullName>
    </alternativeName>
</protein>
<evidence type="ECO:0000255" key="1">
    <source>
        <dbReference type="HAMAP-Rule" id="MF_03122"/>
    </source>
</evidence>
<gene>
    <name evidence="1" type="primary">RPS1A</name>
    <name type="ordered locus">DEHA2D09460g</name>
</gene>
<dbReference type="EMBL" id="CR382136">
    <property type="protein sequence ID" value="CAG87028.1"/>
    <property type="molecule type" value="Genomic_DNA"/>
</dbReference>
<dbReference type="RefSeq" id="XP_458876.1">
    <property type="nucleotide sequence ID" value="XM_458876.1"/>
</dbReference>
<dbReference type="SMR" id="Q6BSE4"/>
<dbReference type="FunCoup" id="Q6BSE4">
    <property type="interactions" value="1452"/>
</dbReference>
<dbReference type="STRING" id="284592.Q6BSE4"/>
<dbReference type="GeneID" id="2900908"/>
<dbReference type="KEGG" id="dha:DEHA2D09460g"/>
<dbReference type="VEuPathDB" id="FungiDB:DEHA2D09460g"/>
<dbReference type="eggNOG" id="KOG1628">
    <property type="taxonomic scope" value="Eukaryota"/>
</dbReference>
<dbReference type="HOGENOM" id="CLU_062507_0_0_1"/>
<dbReference type="InParanoid" id="Q6BSE4"/>
<dbReference type="OMA" id="MCEIITR"/>
<dbReference type="OrthoDB" id="9834376at2759"/>
<dbReference type="Proteomes" id="UP000000599">
    <property type="component" value="Chromosome D"/>
</dbReference>
<dbReference type="GO" id="GO:0022627">
    <property type="term" value="C:cytosolic small ribosomal subunit"/>
    <property type="evidence" value="ECO:0007669"/>
    <property type="project" value="UniProtKB-UniRule"/>
</dbReference>
<dbReference type="GO" id="GO:0003735">
    <property type="term" value="F:structural constituent of ribosome"/>
    <property type="evidence" value="ECO:0007669"/>
    <property type="project" value="UniProtKB-UniRule"/>
</dbReference>
<dbReference type="GO" id="GO:0006412">
    <property type="term" value="P:translation"/>
    <property type="evidence" value="ECO:0007669"/>
    <property type="project" value="UniProtKB-UniRule"/>
</dbReference>
<dbReference type="HAMAP" id="MF_03122">
    <property type="entry name" value="Ribosomal_eS1_euk"/>
    <property type="match status" value="1"/>
</dbReference>
<dbReference type="InterPro" id="IPR001593">
    <property type="entry name" value="Ribosomal_eS1"/>
</dbReference>
<dbReference type="InterPro" id="IPR018281">
    <property type="entry name" value="Ribosomal_eS1_CS"/>
</dbReference>
<dbReference type="InterPro" id="IPR027500">
    <property type="entry name" value="Ribosomal_eS1_euk"/>
</dbReference>
<dbReference type="PANTHER" id="PTHR11830">
    <property type="entry name" value="40S RIBOSOMAL PROTEIN S3A"/>
    <property type="match status" value="1"/>
</dbReference>
<dbReference type="Pfam" id="PF01015">
    <property type="entry name" value="Ribosomal_S3Ae"/>
    <property type="match status" value="1"/>
</dbReference>
<dbReference type="SMART" id="SM01397">
    <property type="entry name" value="Ribosomal_S3Ae"/>
    <property type="match status" value="1"/>
</dbReference>
<dbReference type="PROSITE" id="PS01191">
    <property type="entry name" value="RIBOSOMAL_S3AE"/>
    <property type="match status" value="1"/>
</dbReference>
<accession>Q6BSE4</accession>